<organism>
    <name type="scientific">Aspergillus niger (strain ATCC MYA-4892 / CBS 513.88 / FGSC A1513)</name>
    <dbReference type="NCBI Taxonomy" id="425011"/>
    <lineage>
        <taxon>Eukaryota</taxon>
        <taxon>Fungi</taxon>
        <taxon>Dikarya</taxon>
        <taxon>Ascomycota</taxon>
        <taxon>Pezizomycotina</taxon>
        <taxon>Eurotiomycetes</taxon>
        <taxon>Eurotiomycetidae</taxon>
        <taxon>Eurotiales</taxon>
        <taxon>Aspergillaceae</taxon>
        <taxon>Aspergillus</taxon>
        <taxon>Aspergillus subgen. Circumdati</taxon>
    </lineage>
</organism>
<accession>A2R7S7</accession>
<evidence type="ECO:0000255" key="1">
    <source>
        <dbReference type="HAMAP-Rule" id="MF_03011"/>
    </source>
</evidence>
<evidence type="ECO:0000255" key="2">
    <source>
        <dbReference type="PROSITE-ProRule" id="PRU01185"/>
    </source>
</evidence>
<name>EIF3L_ASPNC</name>
<proteinExistence type="inferred from homology"/>
<reference key="1">
    <citation type="journal article" date="2007" name="Nat. Biotechnol.">
        <title>Genome sequencing and analysis of the versatile cell factory Aspergillus niger CBS 513.88.</title>
        <authorList>
            <person name="Pel H.J."/>
            <person name="de Winde J.H."/>
            <person name="Archer D.B."/>
            <person name="Dyer P.S."/>
            <person name="Hofmann G."/>
            <person name="Schaap P.J."/>
            <person name="Turner G."/>
            <person name="de Vries R.P."/>
            <person name="Albang R."/>
            <person name="Albermann K."/>
            <person name="Andersen M.R."/>
            <person name="Bendtsen J.D."/>
            <person name="Benen J.A.E."/>
            <person name="van den Berg M."/>
            <person name="Breestraat S."/>
            <person name="Caddick M.X."/>
            <person name="Contreras R."/>
            <person name="Cornell M."/>
            <person name="Coutinho P.M."/>
            <person name="Danchin E.G.J."/>
            <person name="Debets A.J.M."/>
            <person name="Dekker P."/>
            <person name="van Dijck P.W.M."/>
            <person name="van Dijk A."/>
            <person name="Dijkhuizen L."/>
            <person name="Driessen A.J.M."/>
            <person name="d'Enfert C."/>
            <person name="Geysens S."/>
            <person name="Goosen C."/>
            <person name="Groot G.S.P."/>
            <person name="de Groot P.W.J."/>
            <person name="Guillemette T."/>
            <person name="Henrissat B."/>
            <person name="Herweijer M."/>
            <person name="van den Hombergh J.P.T.W."/>
            <person name="van den Hondel C.A.M.J.J."/>
            <person name="van der Heijden R.T.J.M."/>
            <person name="van der Kaaij R.M."/>
            <person name="Klis F.M."/>
            <person name="Kools H.J."/>
            <person name="Kubicek C.P."/>
            <person name="van Kuyk P.A."/>
            <person name="Lauber J."/>
            <person name="Lu X."/>
            <person name="van der Maarel M.J.E.C."/>
            <person name="Meulenberg R."/>
            <person name="Menke H."/>
            <person name="Mortimer M.A."/>
            <person name="Nielsen J."/>
            <person name="Oliver S.G."/>
            <person name="Olsthoorn M."/>
            <person name="Pal K."/>
            <person name="van Peij N.N.M.E."/>
            <person name="Ram A.F.J."/>
            <person name="Rinas U."/>
            <person name="Roubos J.A."/>
            <person name="Sagt C.M.J."/>
            <person name="Schmoll M."/>
            <person name="Sun J."/>
            <person name="Ussery D."/>
            <person name="Varga J."/>
            <person name="Vervecken W."/>
            <person name="van de Vondervoort P.J.J."/>
            <person name="Wedler H."/>
            <person name="Woesten H.A.B."/>
            <person name="Zeng A.-P."/>
            <person name="van Ooyen A.J.J."/>
            <person name="Visser J."/>
            <person name="Stam H."/>
        </authorList>
    </citation>
    <scope>NUCLEOTIDE SEQUENCE [LARGE SCALE GENOMIC DNA]</scope>
    <source>
        <strain>ATCC MYA-4892 / CBS 513.88 / FGSC A1513</strain>
    </source>
</reference>
<gene>
    <name type="ORF">An16g04580</name>
</gene>
<feature type="chain" id="PRO_0000364258" description="Eukaryotic translation initiation factor 3 subunit L">
    <location>
        <begin position="1"/>
        <end position="476"/>
    </location>
</feature>
<feature type="domain" description="PCI" evidence="2">
    <location>
        <begin position="257"/>
        <end position="452"/>
    </location>
</feature>
<protein>
    <recommendedName>
        <fullName evidence="1">Eukaryotic translation initiation factor 3 subunit L</fullName>
        <shortName evidence="1">eIF3l</shortName>
    </recommendedName>
</protein>
<dbReference type="EMBL" id="AM270369">
    <property type="protein sequence ID" value="CAK42888.1"/>
    <property type="molecule type" value="Genomic_DNA"/>
</dbReference>
<dbReference type="RefSeq" id="XP_001397769.1">
    <property type="nucleotide sequence ID" value="XM_001397732.2"/>
</dbReference>
<dbReference type="SMR" id="A2R7S7"/>
<dbReference type="EnsemblFungi" id="CAK42888">
    <property type="protein sequence ID" value="CAK42888"/>
    <property type="gene ID" value="An16g04580"/>
</dbReference>
<dbReference type="GeneID" id="4988851"/>
<dbReference type="KEGG" id="ang:An16g04580"/>
<dbReference type="VEuPathDB" id="FungiDB:An16g04580"/>
<dbReference type="HOGENOM" id="CLU_029210_2_0_1"/>
<dbReference type="Proteomes" id="UP000006706">
    <property type="component" value="Chromosome 5R"/>
</dbReference>
<dbReference type="GO" id="GO:0016282">
    <property type="term" value="C:eukaryotic 43S preinitiation complex"/>
    <property type="evidence" value="ECO:0007669"/>
    <property type="project" value="UniProtKB-UniRule"/>
</dbReference>
<dbReference type="GO" id="GO:0033290">
    <property type="term" value="C:eukaryotic 48S preinitiation complex"/>
    <property type="evidence" value="ECO:0007669"/>
    <property type="project" value="UniProtKB-UniRule"/>
</dbReference>
<dbReference type="GO" id="GO:0005852">
    <property type="term" value="C:eukaryotic translation initiation factor 3 complex"/>
    <property type="evidence" value="ECO:0007669"/>
    <property type="project" value="UniProtKB-UniRule"/>
</dbReference>
<dbReference type="GO" id="GO:0003743">
    <property type="term" value="F:translation initiation factor activity"/>
    <property type="evidence" value="ECO:0007669"/>
    <property type="project" value="UniProtKB-UniRule"/>
</dbReference>
<dbReference type="GO" id="GO:0001732">
    <property type="term" value="P:formation of cytoplasmic translation initiation complex"/>
    <property type="evidence" value="ECO:0007669"/>
    <property type="project" value="UniProtKB-UniRule"/>
</dbReference>
<dbReference type="HAMAP" id="MF_03011">
    <property type="entry name" value="eIF3l"/>
    <property type="match status" value="1"/>
</dbReference>
<dbReference type="InterPro" id="IPR019382">
    <property type="entry name" value="eIF3l"/>
</dbReference>
<dbReference type="InterPro" id="IPR000717">
    <property type="entry name" value="PCI_dom"/>
</dbReference>
<dbReference type="PANTHER" id="PTHR13242">
    <property type="entry name" value="EUKARYOTIC TRANSLATION INITIATION FACTOR 3"/>
    <property type="match status" value="1"/>
</dbReference>
<dbReference type="PANTHER" id="PTHR13242:SF0">
    <property type="entry name" value="EUKARYOTIC TRANSLATION INITIATION FACTOR 3 SUBUNIT L"/>
    <property type="match status" value="1"/>
</dbReference>
<dbReference type="Pfam" id="PF10255">
    <property type="entry name" value="Paf67"/>
    <property type="match status" value="1"/>
</dbReference>
<dbReference type="PROSITE" id="PS50250">
    <property type="entry name" value="PCI"/>
    <property type="match status" value="1"/>
</dbReference>
<keyword id="KW-0963">Cytoplasm</keyword>
<keyword id="KW-0396">Initiation factor</keyword>
<keyword id="KW-0648">Protein biosynthesis</keyword>
<keyword id="KW-1185">Reference proteome</keyword>
<sequence length="476" mass="54744">MSYEERANAHPNLGDESDVEEEALVNDYREQVNFDDGMSELDRTTSLGGGSQTQDLQAQLAAAATPLEYQATLETKFASYDNYCSLFHYILNSDGPVELEVPSYYWAWDVIDEFIYQFESFCRYRNRVARSGSNEEEAQLLRENPNTWGCYSVLNVLYSLIQRSQINEQLAAIKRGEDPLAFAGEYGSRPLYKMLGYFSIIGLLRVHCLLGDFSLALKTLDDIEMNKKAMFARVMAAHFTTYYYVGFSYMMMRRYADAIRMFSHILVYVSRTKNFQKGGNSYDAIAKKNDQMYALIAICVALHPTRLDDTIHSALREKYGEQLNRLQHGGPEALPLFEELFRSACPKFISPTPPDFENPALNVDPVDHHTAIFMDEVKNTLYNPTIRSYLKLYTTMDLKKLAGFLEVEPEKLRSWLLINKQRSRQVRWVEGGLLEGEPVNANDLDYALENDLIHVSETKAGRRLVDWYLRNLARVY</sequence>
<comment type="function">
    <text evidence="1">Component of the eukaryotic translation initiation factor 3 (eIF-3) complex, which is involved in protein synthesis of a specialized repertoire of mRNAs and, together with other initiation factors, stimulates binding of mRNA and methionyl-tRNAi to the 40S ribosome. The eIF-3 complex specifically targets and initiates translation of a subset of mRNAs involved in cell proliferation.</text>
</comment>
<comment type="subunit">
    <text evidence="1">Component of the eukaryotic translation initiation factor 3 (eIF-3) complex.</text>
</comment>
<comment type="subcellular location">
    <subcellularLocation>
        <location evidence="1">Cytoplasm</location>
    </subcellularLocation>
</comment>
<comment type="similarity">
    <text evidence="1">Belongs to the eIF-3 subunit L family.</text>
</comment>